<organism>
    <name type="scientific">Drosophila melanogaster</name>
    <name type="common">Fruit fly</name>
    <dbReference type="NCBI Taxonomy" id="7227"/>
    <lineage>
        <taxon>Eukaryota</taxon>
        <taxon>Metazoa</taxon>
        <taxon>Ecdysozoa</taxon>
        <taxon>Arthropoda</taxon>
        <taxon>Hexapoda</taxon>
        <taxon>Insecta</taxon>
        <taxon>Pterygota</taxon>
        <taxon>Neoptera</taxon>
        <taxon>Endopterygota</taxon>
        <taxon>Diptera</taxon>
        <taxon>Brachycera</taxon>
        <taxon>Muscomorpha</taxon>
        <taxon>Ephydroidea</taxon>
        <taxon>Drosophilidae</taxon>
        <taxon>Drosophila</taxon>
        <taxon>Sophophora</taxon>
    </lineage>
</organism>
<comment type="function">
    <text evidence="1">Molecular calcium-binding chaperone promoting folding, oligomeric assembly and quality control in the ER via the calreticulin/calnexin cycle. This lectin may interact transiently with almost all of the monoglucosylated glycoproteins that are synthesized in the ER (By similarity).</text>
</comment>
<comment type="subcellular location">
    <subcellularLocation>
        <location>Endoplasmic reticulum lumen</location>
    </subcellularLocation>
</comment>
<comment type="domain">
    <text evidence="1">Can be divided into a N-terminal globular domain, a proline-rich P-domain forming an elongated arm-like structure and a C-terminal acidic domain. The P-domain binds one molecule of calcium with high affinity, whereas the acidic C-domain binds multiple calcium ions with low affinity (By similarity).</text>
</comment>
<comment type="domain">
    <text evidence="1">The interaction with glycans occurs through a binding site in the globular lectin domain.</text>
</comment>
<comment type="domain">
    <text evidence="1">The zinc binding sites are localized to the N-domain.</text>
</comment>
<comment type="similarity">
    <text evidence="6">Belongs to the calreticulin family.</text>
</comment>
<gene>
    <name evidence="7" type="primary">Calr</name>
    <name evidence="7" type="synonym">Crc</name>
    <name evidence="7" type="ORF">CG9429</name>
</gene>
<proteinExistence type="evidence at protein level"/>
<keyword id="KW-0106">Calcium</keyword>
<keyword id="KW-0143">Chaperone</keyword>
<keyword id="KW-0903">Direct protein sequencing</keyword>
<keyword id="KW-1015">Disulfide bond</keyword>
<keyword id="KW-0256">Endoplasmic reticulum</keyword>
<keyword id="KW-0430">Lectin</keyword>
<keyword id="KW-0479">Metal-binding</keyword>
<keyword id="KW-1185">Reference proteome</keyword>
<keyword id="KW-0677">Repeat</keyword>
<keyword id="KW-0732">Signal</keyword>
<keyword id="KW-0862">Zinc</keyword>
<dbReference type="EMBL" id="X64461">
    <property type="protein sequence ID" value="CAA45791.1"/>
    <property type="molecule type" value="Genomic_DNA"/>
</dbReference>
<dbReference type="EMBL" id="AE014297">
    <property type="protein sequence ID" value="AAF54416.1"/>
    <property type="molecule type" value="Genomic_DNA"/>
</dbReference>
<dbReference type="PIR" id="A56637">
    <property type="entry name" value="A56637"/>
</dbReference>
<dbReference type="RefSeq" id="NP_001262430.1">
    <property type="nucleotide sequence ID" value="NM_001275501.1"/>
</dbReference>
<dbReference type="RefSeq" id="NP_524293.2">
    <property type="nucleotide sequence ID" value="NM_079569.5"/>
</dbReference>
<dbReference type="SMR" id="P29413"/>
<dbReference type="BioGRID" id="66325">
    <property type="interactions" value="96"/>
</dbReference>
<dbReference type="DIP" id="DIP-19046N"/>
<dbReference type="FunCoup" id="P29413">
    <property type="interactions" value="1910"/>
</dbReference>
<dbReference type="IntAct" id="P29413">
    <property type="interactions" value="149"/>
</dbReference>
<dbReference type="STRING" id="7227.FBpp0306685"/>
<dbReference type="GlyGen" id="P29413">
    <property type="glycosylation" value="1 site, 1 O-linked glycan (1 site)"/>
</dbReference>
<dbReference type="PaxDb" id="7227-FBpp0081581"/>
<dbReference type="DNASU" id="41166"/>
<dbReference type="EnsemblMetazoa" id="FBtr0082103">
    <property type="protein sequence ID" value="FBpp0081581"/>
    <property type="gene ID" value="FBgn0005585"/>
</dbReference>
<dbReference type="EnsemblMetazoa" id="FBtr0334618">
    <property type="protein sequence ID" value="FBpp0306685"/>
    <property type="gene ID" value="FBgn0005585"/>
</dbReference>
<dbReference type="GeneID" id="41166"/>
<dbReference type="KEGG" id="dme:Dmel_CG9429"/>
<dbReference type="AGR" id="FB:FBgn0005585"/>
<dbReference type="CTD" id="811"/>
<dbReference type="FlyBase" id="FBgn0005585">
    <property type="gene designation" value="Calr"/>
</dbReference>
<dbReference type="VEuPathDB" id="VectorBase:FBgn0005585"/>
<dbReference type="eggNOG" id="KOG0674">
    <property type="taxonomic scope" value="Eukaryota"/>
</dbReference>
<dbReference type="HOGENOM" id="CLU_018224_0_2_1"/>
<dbReference type="InParanoid" id="P29413"/>
<dbReference type="OMA" id="KRDEICA"/>
<dbReference type="OrthoDB" id="1938156at2759"/>
<dbReference type="PhylomeDB" id="P29413"/>
<dbReference type="Reactome" id="R-DME-901042">
    <property type="pathway name" value="Calnexin/calreticulin cycle"/>
</dbReference>
<dbReference type="SignaLink" id="P29413"/>
<dbReference type="BioGRID-ORCS" id="41166">
    <property type="hits" value="1 hit in 3 CRISPR screens"/>
</dbReference>
<dbReference type="ChiTaRS" id="Calr">
    <property type="organism name" value="fly"/>
</dbReference>
<dbReference type="GenomeRNAi" id="41166"/>
<dbReference type="PRO" id="PR:P29413"/>
<dbReference type="Proteomes" id="UP000000803">
    <property type="component" value="Chromosome 3R"/>
</dbReference>
<dbReference type="Bgee" id="FBgn0005585">
    <property type="expression patterns" value="Expressed in posterior terminal follicle cell in ovary and 291 other cell types or tissues"/>
</dbReference>
<dbReference type="ExpressionAtlas" id="P29413">
    <property type="expression patterns" value="baseline and differential"/>
</dbReference>
<dbReference type="GO" id="GO:0012505">
    <property type="term" value="C:endomembrane system"/>
    <property type="evidence" value="ECO:0007005"/>
    <property type="project" value="FlyBase"/>
</dbReference>
<dbReference type="GO" id="GO:0005788">
    <property type="term" value="C:endoplasmic reticulum lumen"/>
    <property type="evidence" value="ECO:0007669"/>
    <property type="project" value="UniProtKB-SubCell"/>
</dbReference>
<dbReference type="GO" id="GO:0005789">
    <property type="term" value="C:endoplasmic reticulum membrane"/>
    <property type="evidence" value="ECO:0000318"/>
    <property type="project" value="GO_Central"/>
</dbReference>
<dbReference type="GO" id="GO:0005615">
    <property type="term" value="C:extracellular space"/>
    <property type="evidence" value="ECO:0000314"/>
    <property type="project" value="FlyBase"/>
</dbReference>
<dbReference type="GO" id="GO:0045169">
    <property type="term" value="C:fusome"/>
    <property type="evidence" value="ECO:0000314"/>
    <property type="project" value="FlyBase"/>
</dbReference>
<dbReference type="GO" id="GO:0005739">
    <property type="term" value="C:mitochondrion"/>
    <property type="evidence" value="ECO:0000250"/>
    <property type="project" value="FlyBase"/>
</dbReference>
<dbReference type="GO" id="GO:0005509">
    <property type="term" value="F:calcium ion binding"/>
    <property type="evidence" value="ECO:0000318"/>
    <property type="project" value="GO_Central"/>
</dbReference>
<dbReference type="GO" id="GO:0030246">
    <property type="term" value="F:carbohydrate binding"/>
    <property type="evidence" value="ECO:0007669"/>
    <property type="project" value="UniProtKB-KW"/>
</dbReference>
<dbReference type="GO" id="GO:0051082">
    <property type="term" value="F:unfolded protein binding"/>
    <property type="evidence" value="ECO:0007669"/>
    <property type="project" value="InterPro"/>
</dbReference>
<dbReference type="GO" id="GO:0036503">
    <property type="term" value="P:ERAD pathway"/>
    <property type="evidence" value="ECO:0000318"/>
    <property type="project" value="GO_Central"/>
</dbReference>
<dbReference type="GO" id="GO:0042048">
    <property type="term" value="P:olfactory behavior"/>
    <property type="evidence" value="ECO:0000315"/>
    <property type="project" value="FlyBase"/>
</dbReference>
<dbReference type="GO" id="GO:0006457">
    <property type="term" value="P:protein folding"/>
    <property type="evidence" value="ECO:0000318"/>
    <property type="project" value="GO_Central"/>
</dbReference>
<dbReference type="GO" id="GO:0030431">
    <property type="term" value="P:sleep"/>
    <property type="evidence" value="ECO:0000315"/>
    <property type="project" value="FlyBase"/>
</dbReference>
<dbReference type="FunFam" id="2.10.250.10:FF:000002">
    <property type="entry name" value="Calreticulin"/>
    <property type="match status" value="1"/>
</dbReference>
<dbReference type="FunFam" id="2.60.120.200:FF:000122">
    <property type="entry name" value="Calreticulin 3"/>
    <property type="match status" value="1"/>
</dbReference>
<dbReference type="Gene3D" id="2.60.120.200">
    <property type="match status" value="1"/>
</dbReference>
<dbReference type="Gene3D" id="2.10.250.10">
    <property type="entry name" value="Calreticulin/calnexin, P domain"/>
    <property type="match status" value="1"/>
</dbReference>
<dbReference type="InterPro" id="IPR001580">
    <property type="entry name" value="Calret/calnex"/>
</dbReference>
<dbReference type="InterPro" id="IPR018124">
    <property type="entry name" value="Calret/calnex_CS"/>
</dbReference>
<dbReference type="InterPro" id="IPR009169">
    <property type="entry name" value="Calreticulin"/>
</dbReference>
<dbReference type="InterPro" id="IPR009033">
    <property type="entry name" value="Calreticulin/calnexin_P_dom_sf"/>
</dbReference>
<dbReference type="InterPro" id="IPR013320">
    <property type="entry name" value="ConA-like_dom_sf"/>
</dbReference>
<dbReference type="PANTHER" id="PTHR11073:SF2">
    <property type="entry name" value="CALRETICULIN"/>
    <property type="match status" value="1"/>
</dbReference>
<dbReference type="PANTHER" id="PTHR11073">
    <property type="entry name" value="CALRETICULIN AND CALNEXIN"/>
    <property type="match status" value="1"/>
</dbReference>
<dbReference type="Pfam" id="PF00262">
    <property type="entry name" value="Calreticulin"/>
    <property type="match status" value="2"/>
</dbReference>
<dbReference type="PIRSF" id="PIRSF002356">
    <property type="entry name" value="Calreticulin"/>
    <property type="match status" value="1"/>
</dbReference>
<dbReference type="PRINTS" id="PR00626">
    <property type="entry name" value="CALRETICULIN"/>
</dbReference>
<dbReference type="SUPFAM" id="SSF49899">
    <property type="entry name" value="Concanavalin A-like lectins/glucanases"/>
    <property type="match status" value="1"/>
</dbReference>
<dbReference type="SUPFAM" id="SSF63887">
    <property type="entry name" value="P-domain of calnexin/calreticulin"/>
    <property type="match status" value="1"/>
</dbReference>
<dbReference type="PROSITE" id="PS00803">
    <property type="entry name" value="CALRETICULIN_1"/>
    <property type="match status" value="1"/>
</dbReference>
<dbReference type="PROSITE" id="PS00804">
    <property type="entry name" value="CALRETICULIN_2"/>
    <property type="match status" value="1"/>
</dbReference>
<dbReference type="PROSITE" id="PS00805">
    <property type="entry name" value="CALRETICULIN_REPEAT"/>
    <property type="match status" value="3"/>
</dbReference>
<dbReference type="PROSITE" id="PS00014">
    <property type="entry name" value="ER_TARGET"/>
    <property type="match status" value="1"/>
</dbReference>
<protein>
    <recommendedName>
        <fullName evidence="5">Calreticulin</fullName>
    </recommendedName>
</protein>
<name>CALR_DROME</name>
<sequence length="406" mass="46808">MMWCKTVIVLLATVGFISAEVYLKENFDNENWEDTWIYSKHPGKEFGKFVLTPGTFYNDAEADKGIQTSQDARFYAASRKFDGFSNEDKPLVVQFSVKHEQNIDCGGGYVKLFDCSLDQTDMHGESPYEIMFGPDICGPGTKKVHVIFSYKGKNHLISKDIRCKDDVYTHFYTLIVRPDNTYEVLIDNEKVESGNLEDDWDFLAPKKIKDPTATKPEDWDDRATIPDPDDKKPEDWDKPEHIPDPDATKPEDWDDEMDGEWEPPMIDNPEFKGEWQPKQLDNPNYKGAWEHPEIANPEYVPDDKLYLRKEICTLGFDLWQVKSGTIFDNVLITDDVELAAKAAAEVKNTQAGEKKMKEAQDEVQRKKDEEEAKKASDKDDEDEDDDDEEKDDESKQDKDQSEHDEL</sequence>
<accession>P29413</accession>
<accession>Q9VHA3</accession>
<reference key="1">
    <citation type="journal article" date="1992" name="DNA Seq.">
        <title>Nucleotide sequence of a Drosophila melanogaster gene encoding a calreticulin homologue.</title>
        <authorList>
            <person name="Smith M.J."/>
        </authorList>
    </citation>
    <scope>NUCLEOTIDE SEQUENCE [GENOMIC DNA]</scope>
</reference>
<reference key="2">
    <citation type="journal article" date="2000" name="Science">
        <title>The genome sequence of Drosophila melanogaster.</title>
        <authorList>
            <person name="Adams M.D."/>
            <person name="Celniker S.E."/>
            <person name="Holt R.A."/>
            <person name="Evans C.A."/>
            <person name="Gocayne J.D."/>
            <person name="Amanatides P.G."/>
            <person name="Scherer S.E."/>
            <person name="Li P.W."/>
            <person name="Hoskins R.A."/>
            <person name="Galle R.F."/>
            <person name="George R.A."/>
            <person name="Lewis S.E."/>
            <person name="Richards S."/>
            <person name="Ashburner M."/>
            <person name="Henderson S.N."/>
            <person name="Sutton G.G."/>
            <person name="Wortman J.R."/>
            <person name="Yandell M.D."/>
            <person name="Zhang Q."/>
            <person name="Chen L.X."/>
            <person name="Brandon R.C."/>
            <person name="Rogers Y.-H.C."/>
            <person name="Blazej R.G."/>
            <person name="Champe M."/>
            <person name="Pfeiffer B.D."/>
            <person name="Wan K.H."/>
            <person name="Doyle C."/>
            <person name="Baxter E.G."/>
            <person name="Helt G."/>
            <person name="Nelson C.R."/>
            <person name="Miklos G.L.G."/>
            <person name="Abril J.F."/>
            <person name="Agbayani A."/>
            <person name="An H.-J."/>
            <person name="Andrews-Pfannkoch C."/>
            <person name="Baldwin D."/>
            <person name="Ballew R.M."/>
            <person name="Basu A."/>
            <person name="Baxendale J."/>
            <person name="Bayraktaroglu L."/>
            <person name="Beasley E.M."/>
            <person name="Beeson K.Y."/>
            <person name="Benos P.V."/>
            <person name="Berman B.P."/>
            <person name="Bhandari D."/>
            <person name="Bolshakov S."/>
            <person name="Borkova D."/>
            <person name="Botchan M.R."/>
            <person name="Bouck J."/>
            <person name="Brokstein P."/>
            <person name="Brottier P."/>
            <person name="Burtis K.C."/>
            <person name="Busam D.A."/>
            <person name="Butler H."/>
            <person name="Cadieu E."/>
            <person name="Center A."/>
            <person name="Chandra I."/>
            <person name="Cherry J.M."/>
            <person name="Cawley S."/>
            <person name="Dahlke C."/>
            <person name="Davenport L.B."/>
            <person name="Davies P."/>
            <person name="de Pablos B."/>
            <person name="Delcher A."/>
            <person name="Deng Z."/>
            <person name="Mays A.D."/>
            <person name="Dew I."/>
            <person name="Dietz S.M."/>
            <person name="Dodson K."/>
            <person name="Doup L.E."/>
            <person name="Downes M."/>
            <person name="Dugan-Rocha S."/>
            <person name="Dunkov B.C."/>
            <person name="Dunn P."/>
            <person name="Durbin K.J."/>
            <person name="Evangelista C.C."/>
            <person name="Ferraz C."/>
            <person name="Ferriera S."/>
            <person name="Fleischmann W."/>
            <person name="Fosler C."/>
            <person name="Gabrielian A.E."/>
            <person name="Garg N.S."/>
            <person name="Gelbart W.M."/>
            <person name="Glasser K."/>
            <person name="Glodek A."/>
            <person name="Gong F."/>
            <person name="Gorrell J.H."/>
            <person name="Gu Z."/>
            <person name="Guan P."/>
            <person name="Harris M."/>
            <person name="Harris N.L."/>
            <person name="Harvey D.A."/>
            <person name="Heiman T.J."/>
            <person name="Hernandez J.R."/>
            <person name="Houck J."/>
            <person name="Hostin D."/>
            <person name="Houston K.A."/>
            <person name="Howland T.J."/>
            <person name="Wei M.-H."/>
            <person name="Ibegwam C."/>
            <person name="Jalali M."/>
            <person name="Kalush F."/>
            <person name="Karpen G.H."/>
            <person name="Ke Z."/>
            <person name="Kennison J.A."/>
            <person name="Ketchum K.A."/>
            <person name="Kimmel B.E."/>
            <person name="Kodira C.D."/>
            <person name="Kraft C.L."/>
            <person name="Kravitz S."/>
            <person name="Kulp D."/>
            <person name="Lai Z."/>
            <person name="Lasko P."/>
            <person name="Lei Y."/>
            <person name="Levitsky A.A."/>
            <person name="Li J.H."/>
            <person name="Li Z."/>
            <person name="Liang Y."/>
            <person name="Lin X."/>
            <person name="Liu X."/>
            <person name="Mattei B."/>
            <person name="McIntosh T.C."/>
            <person name="McLeod M.P."/>
            <person name="McPherson D."/>
            <person name="Merkulov G."/>
            <person name="Milshina N.V."/>
            <person name="Mobarry C."/>
            <person name="Morris J."/>
            <person name="Moshrefi A."/>
            <person name="Mount S.M."/>
            <person name="Moy M."/>
            <person name="Murphy B."/>
            <person name="Murphy L."/>
            <person name="Muzny D.M."/>
            <person name="Nelson D.L."/>
            <person name="Nelson D.R."/>
            <person name="Nelson K.A."/>
            <person name="Nixon K."/>
            <person name="Nusskern D.R."/>
            <person name="Pacleb J.M."/>
            <person name="Palazzolo M."/>
            <person name="Pittman G.S."/>
            <person name="Pan S."/>
            <person name="Pollard J."/>
            <person name="Puri V."/>
            <person name="Reese M.G."/>
            <person name="Reinert K."/>
            <person name="Remington K."/>
            <person name="Saunders R.D.C."/>
            <person name="Scheeler F."/>
            <person name="Shen H."/>
            <person name="Shue B.C."/>
            <person name="Siden-Kiamos I."/>
            <person name="Simpson M."/>
            <person name="Skupski M.P."/>
            <person name="Smith T.J."/>
            <person name="Spier E."/>
            <person name="Spradling A.C."/>
            <person name="Stapleton M."/>
            <person name="Strong R."/>
            <person name="Sun E."/>
            <person name="Svirskas R."/>
            <person name="Tector C."/>
            <person name="Turner R."/>
            <person name="Venter E."/>
            <person name="Wang A.H."/>
            <person name="Wang X."/>
            <person name="Wang Z.-Y."/>
            <person name="Wassarman D.A."/>
            <person name="Weinstock G.M."/>
            <person name="Weissenbach J."/>
            <person name="Williams S.M."/>
            <person name="Woodage T."/>
            <person name="Worley K.C."/>
            <person name="Wu D."/>
            <person name="Yang S."/>
            <person name="Yao Q.A."/>
            <person name="Ye J."/>
            <person name="Yeh R.-F."/>
            <person name="Zaveri J.S."/>
            <person name="Zhan M."/>
            <person name="Zhang G."/>
            <person name="Zhao Q."/>
            <person name="Zheng L."/>
            <person name="Zheng X.H."/>
            <person name="Zhong F.N."/>
            <person name="Zhong W."/>
            <person name="Zhou X."/>
            <person name="Zhu S.C."/>
            <person name="Zhu X."/>
            <person name="Smith H.O."/>
            <person name="Gibbs R.A."/>
            <person name="Myers E.W."/>
            <person name="Rubin G.M."/>
            <person name="Venter J.C."/>
        </authorList>
    </citation>
    <scope>NUCLEOTIDE SEQUENCE [LARGE SCALE GENOMIC DNA]</scope>
    <source>
        <strain>Berkeley</strain>
    </source>
</reference>
<reference key="3">
    <citation type="journal article" date="2002" name="Genome Biol.">
        <title>Annotation of the Drosophila melanogaster euchromatic genome: a systematic review.</title>
        <authorList>
            <person name="Misra S."/>
            <person name="Crosby M.A."/>
            <person name="Mungall C.J."/>
            <person name="Matthews B.B."/>
            <person name="Campbell K.S."/>
            <person name="Hradecky P."/>
            <person name="Huang Y."/>
            <person name="Kaminker J.S."/>
            <person name="Millburn G.H."/>
            <person name="Prochnik S.E."/>
            <person name="Smith C.D."/>
            <person name="Tupy J.L."/>
            <person name="Whitfield E.J."/>
            <person name="Bayraktaroglu L."/>
            <person name="Berman B.P."/>
            <person name="Bettencourt B.R."/>
            <person name="Celniker S.E."/>
            <person name="de Grey A.D.N.J."/>
            <person name="Drysdale R.A."/>
            <person name="Harris N.L."/>
            <person name="Richter J."/>
            <person name="Russo S."/>
            <person name="Schroeder A.J."/>
            <person name="Shu S.Q."/>
            <person name="Stapleton M."/>
            <person name="Yamada C."/>
            <person name="Ashburner M."/>
            <person name="Gelbart W.M."/>
            <person name="Rubin G.M."/>
            <person name="Lewis S.E."/>
        </authorList>
    </citation>
    <scope>GENOME REANNOTATION</scope>
    <source>
        <strain>Berkeley</strain>
    </source>
</reference>
<reference key="4">
    <citation type="journal article" date="1990" name="J. Clin. Invest.">
        <title>A human Ro/SS-A autoantigen is the homologue of calreticulin and is highly homologous with onchocercal RAL-1 antigen and an aplysia 'memory molecule'.</title>
        <authorList>
            <person name="McCauliffe D.P."/>
            <person name="Zappi E."/>
            <person name="Lieu T.S."/>
            <person name="Michalak M."/>
            <person name="Sontheimer R.D."/>
            <person name="Capra J.D."/>
        </authorList>
    </citation>
    <scope>PROTEIN SEQUENCE OF 91-124 AND 182-220</scope>
</reference>
<feature type="signal peptide" evidence="3">
    <location>
        <begin position="1"/>
        <end position="17"/>
    </location>
</feature>
<feature type="chain" id="PRO_0000004182" description="Calreticulin">
    <location>
        <begin position="18"/>
        <end position="406"/>
    </location>
</feature>
<feature type="repeat" description="1-1">
    <location>
        <begin position="191"/>
        <end position="202"/>
    </location>
</feature>
<feature type="repeat" description="1-2">
    <location>
        <begin position="210"/>
        <end position="221"/>
    </location>
</feature>
<feature type="repeat" description="1-3">
    <location>
        <begin position="227"/>
        <end position="238"/>
    </location>
</feature>
<feature type="repeat" description="1-4">
    <location>
        <begin position="244"/>
        <end position="255"/>
    </location>
</feature>
<feature type="repeat" description="2-1">
    <location>
        <begin position="259"/>
        <end position="269"/>
    </location>
</feature>
<feature type="repeat" description="2-2">
    <location>
        <begin position="273"/>
        <end position="283"/>
    </location>
</feature>
<feature type="repeat" description="2-3">
    <location>
        <begin position="287"/>
        <end position="297"/>
    </location>
</feature>
<feature type="region of interest" description="4 X approximate repeats">
    <location>
        <begin position="191"/>
        <end position="255"/>
    </location>
</feature>
<feature type="region of interest" description="Disordered" evidence="4">
    <location>
        <begin position="207"/>
        <end position="259"/>
    </location>
</feature>
<feature type="region of interest" description="3 X approximate repeats">
    <location>
        <begin position="259"/>
        <end position="297"/>
    </location>
</feature>
<feature type="region of interest" description="Disordered" evidence="4">
    <location>
        <begin position="347"/>
        <end position="406"/>
    </location>
</feature>
<feature type="compositionally biased region" description="Basic and acidic residues" evidence="4">
    <location>
        <begin position="207"/>
        <end position="251"/>
    </location>
</feature>
<feature type="compositionally biased region" description="Basic and acidic residues" evidence="4">
    <location>
        <begin position="352"/>
        <end position="377"/>
    </location>
</feature>
<feature type="compositionally biased region" description="Acidic residues" evidence="4">
    <location>
        <begin position="378"/>
        <end position="391"/>
    </location>
</feature>
<feature type="compositionally biased region" description="Basic and acidic residues" evidence="4">
    <location>
        <begin position="392"/>
        <end position="406"/>
    </location>
</feature>
<feature type="binding site" evidence="2">
    <location>
        <position position="109"/>
    </location>
    <ligand>
        <name>an alpha-D-glucoside</name>
        <dbReference type="ChEBI" id="CHEBI:22390"/>
    </ligand>
</feature>
<feature type="binding site" evidence="2">
    <location>
        <position position="111"/>
    </location>
    <ligand>
        <name>an alpha-D-glucoside</name>
        <dbReference type="ChEBI" id="CHEBI:22390"/>
    </ligand>
</feature>
<feature type="binding site" evidence="2">
    <location>
        <position position="128"/>
    </location>
    <ligand>
        <name>an alpha-D-glucoside</name>
        <dbReference type="ChEBI" id="CHEBI:22390"/>
    </ligand>
</feature>
<feature type="binding site" evidence="2">
    <location>
        <position position="135"/>
    </location>
    <ligand>
        <name>an alpha-D-glucoside</name>
        <dbReference type="ChEBI" id="CHEBI:22390"/>
    </ligand>
</feature>
<feature type="binding site" evidence="2">
    <location>
        <position position="317"/>
    </location>
    <ligand>
        <name>an alpha-D-glucoside</name>
        <dbReference type="ChEBI" id="CHEBI:22390"/>
    </ligand>
</feature>
<feature type="disulfide bond" evidence="1">
    <location>
        <begin position="105"/>
        <end position="137"/>
    </location>
</feature>
<feature type="sequence conflict" description="In Ref. 4; AA sequence." evidence="6" ref="4">
    <original>G</original>
    <variation>A</variation>
    <location>
        <position position="107"/>
    </location>
</feature>
<feature type="sequence conflict" description="In Ref. 4; AA sequence." evidence="6" ref="4">
    <original>V</original>
    <variation>L</variation>
    <location>
        <position position="184"/>
    </location>
</feature>
<evidence type="ECO:0000250" key="1"/>
<evidence type="ECO:0000250" key="2">
    <source>
        <dbReference type="UniProtKB" id="P14211"/>
    </source>
</evidence>
<evidence type="ECO:0000255" key="3"/>
<evidence type="ECO:0000256" key="4">
    <source>
        <dbReference type="SAM" id="MobiDB-lite"/>
    </source>
</evidence>
<evidence type="ECO:0000303" key="5">
    <source>
    </source>
</evidence>
<evidence type="ECO:0000305" key="6"/>
<evidence type="ECO:0000312" key="7">
    <source>
        <dbReference type="FlyBase" id="FBgn0005585"/>
    </source>
</evidence>